<comment type="function">
    <text evidence="1">Catalyzes the NADPH-dependent reduction of L-glutamate 5-phosphate into L-glutamate 5-semialdehyde and phosphate. The product spontaneously undergoes cyclization to form 1-pyrroline-5-carboxylate.</text>
</comment>
<comment type="catalytic activity">
    <reaction evidence="1">
        <text>L-glutamate 5-semialdehyde + phosphate + NADP(+) = L-glutamyl 5-phosphate + NADPH + H(+)</text>
        <dbReference type="Rhea" id="RHEA:19541"/>
        <dbReference type="ChEBI" id="CHEBI:15378"/>
        <dbReference type="ChEBI" id="CHEBI:43474"/>
        <dbReference type="ChEBI" id="CHEBI:57783"/>
        <dbReference type="ChEBI" id="CHEBI:58066"/>
        <dbReference type="ChEBI" id="CHEBI:58274"/>
        <dbReference type="ChEBI" id="CHEBI:58349"/>
        <dbReference type="EC" id="1.2.1.41"/>
    </reaction>
</comment>
<comment type="pathway">
    <text evidence="1">Amino-acid biosynthesis; L-proline biosynthesis; L-glutamate 5-semialdehyde from L-glutamate: step 2/2.</text>
</comment>
<comment type="subcellular location">
    <subcellularLocation>
        <location evidence="1">Cytoplasm</location>
    </subcellularLocation>
</comment>
<comment type="similarity">
    <text evidence="1">Belongs to the gamma-glutamyl phosphate reductase family.</text>
</comment>
<dbReference type="EC" id="1.2.1.41" evidence="1"/>
<dbReference type="EMBL" id="CP000554">
    <property type="protein sequence ID" value="ABM78587.1"/>
    <property type="molecule type" value="Genomic_DNA"/>
</dbReference>
<dbReference type="RefSeq" id="WP_011826472.1">
    <property type="nucleotide sequence ID" value="NC_008820.1"/>
</dbReference>
<dbReference type="SMR" id="A2CAS7"/>
<dbReference type="STRING" id="59922.P9303_18451"/>
<dbReference type="KEGG" id="pmf:P9303_18451"/>
<dbReference type="HOGENOM" id="CLU_030231_0_1_3"/>
<dbReference type="BioCyc" id="PMAR59922:G1G80-1600-MONOMER"/>
<dbReference type="UniPathway" id="UPA00098">
    <property type="reaction ID" value="UER00360"/>
</dbReference>
<dbReference type="Proteomes" id="UP000002274">
    <property type="component" value="Chromosome"/>
</dbReference>
<dbReference type="GO" id="GO:0005737">
    <property type="term" value="C:cytoplasm"/>
    <property type="evidence" value="ECO:0007669"/>
    <property type="project" value="UniProtKB-SubCell"/>
</dbReference>
<dbReference type="GO" id="GO:0004350">
    <property type="term" value="F:glutamate-5-semialdehyde dehydrogenase activity"/>
    <property type="evidence" value="ECO:0007669"/>
    <property type="project" value="UniProtKB-UniRule"/>
</dbReference>
<dbReference type="GO" id="GO:0050661">
    <property type="term" value="F:NADP binding"/>
    <property type="evidence" value="ECO:0007669"/>
    <property type="project" value="InterPro"/>
</dbReference>
<dbReference type="GO" id="GO:0055129">
    <property type="term" value="P:L-proline biosynthetic process"/>
    <property type="evidence" value="ECO:0007669"/>
    <property type="project" value="UniProtKB-UniRule"/>
</dbReference>
<dbReference type="CDD" id="cd07079">
    <property type="entry name" value="ALDH_F18-19_ProA-GPR"/>
    <property type="match status" value="1"/>
</dbReference>
<dbReference type="FunFam" id="3.40.309.10:FF:000006">
    <property type="entry name" value="Gamma-glutamyl phosphate reductase"/>
    <property type="match status" value="1"/>
</dbReference>
<dbReference type="Gene3D" id="3.40.605.10">
    <property type="entry name" value="Aldehyde Dehydrogenase, Chain A, domain 1"/>
    <property type="match status" value="1"/>
</dbReference>
<dbReference type="Gene3D" id="3.40.309.10">
    <property type="entry name" value="Aldehyde Dehydrogenase, Chain A, domain 2"/>
    <property type="match status" value="1"/>
</dbReference>
<dbReference type="HAMAP" id="MF_00412">
    <property type="entry name" value="ProA"/>
    <property type="match status" value="1"/>
</dbReference>
<dbReference type="InterPro" id="IPR016161">
    <property type="entry name" value="Ald_DH/histidinol_DH"/>
</dbReference>
<dbReference type="InterPro" id="IPR016163">
    <property type="entry name" value="Ald_DH_C"/>
</dbReference>
<dbReference type="InterPro" id="IPR016162">
    <property type="entry name" value="Ald_DH_N"/>
</dbReference>
<dbReference type="InterPro" id="IPR015590">
    <property type="entry name" value="Aldehyde_DH_dom"/>
</dbReference>
<dbReference type="InterPro" id="IPR020593">
    <property type="entry name" value="G-glutamylP_reductase_CS"/>
</dbReference>
<dbReference type="InterPro" id="IPR012134">
    <property type="entry name" value="Glu-5-SA_DH"/>
</dbReference>
<dbReference type="InterPro" id="IPR000965">
    <property type="entry name" value="GPR_dom"/>
</dbReference>
<dbReference type="NCBIfam" id="NF001221">
    <property type="entry name" value="PRK00197.1"/>
    <property type="match status" value="1"/>
</dbReference>
<dbReference type="NCBIfam" id="TIGR00407">
    <property type="entry name" value="proA"/>
    <property type="match status" value="1"/>
</dbReference>
<dbReference type="PANTHER" id="PTHR11063:SF8">
    <property type="entry name" value="DELTA-1-PYRROLINE-5-CARBOXYLATE SYNTHASE"/>
    <property type="match status" value="1"/>
</dbReference>
<dbReference type="PANTHER" id="PTHR11063">
    <property type="entry name" value="GLUTAMATE SEMIALDEHYDE DEHYDROGENASE"/>
    <property type="match status" value="1"/>
</dbReference>
<dbReference type="Pfam" id="PF00171">
    <property type="entry name" value="Aldedh"/>
    <property type="match status" value="1"/>
</dbReference>
<dbReference type="PIRSF" id="PIRSF000151">
    <property type="entry name" value="GPR"/>
    <property type="match status" value="1"/>
</dbReference>
<dbReference type="SUPFAM" id="SSF53720">
    <property type="entry name" value="ALDH-like"/>
    <property type="match status" value="1"/>
</dbReference>
<dbReference type="PROSITE" id="PS01223">
    <property type="entry name" value="PROA"/>
    <property type="match status" value="1"/>
</dbReference>
<feature type="chain" id="PRO_1000049978" description="Gamma-glutamyl phosphate reductase">
    <location>
        <begin position="1"/>
        <end position="438"/>
    </location>
</feature>
<accession>A2CAS7</accession>
<keyword id="KW-0028">Amino-acid biosynthesis</keyword>
<keyword id="KW-0963">Cytoplasm</keyword>
<keyword id="KW-0521">NADP</keyword>
<keyword id="KW-0560">Oxidoreductase</keyword>
<keyword id="KW-0641">Proline biosynthesis</keyword>
<proteinExistence type="inferred from homology"/>
<protein>
    <recommendedName>
        <fullName evidence="1">Gamma-glutamyl phosphate reductase</fullName>
        <shortName evidence="1">GPR</shortName>
        <ecNumber evidence="1">1.2.1.41</ecNumber>
    </recommendedName>
    <alternativeName>
        <fullName evidence="1">Glutamate-5-semialdehyde dehydrogenase</fullName>
    </alternativeName>
    <alternativeName>
        <fullName evidence="1">Glutamyl-gamma-semialdehyde dehydrogenase</fullName>
        <shortName evidence="1">GSA dehydrogenase</shortName>
    </alternativeName>
</protein>
<reference key="1">
    <citation type="journal article" date="2007" name="PLoS Genet.">
        <title>Patterns and implications of gene gain and loss in the evolution of Prochlorococcus.</title>
        <authorList>
            <person name="Kettler G.C."/>
            <person name="Martiny A.C."/>
            <person name="Huang K."/>
            <person name="Zucker J."/>
            <person name="Coleman M.L."/>
            <person name="Rodrigue S."/>
            <person name="Chen F."/>
            <person name="Lapidus A."/>
            <person name="Ferriera S."/>
            <person name="Johnson J."/>
            <person name="Steglich C."/>
            <person name="Church G.M."/>
            <person name="Richardson P."/>
            <person name="Chisholm S.W."/>
        </authorList>
    </citation>
    <scope>NUCLEOTIDE SEQUENCE [LARGE SCALE GENOMIC DNA]</scope>
    <source>
        <strain>MIT 9303</strain>
    </source>
</reference>
<evidence type="ECO:0000255" key="1">
    <source>
        <dbReference type="HAMAP-Rule" id="MF_00412"/>
    </source>
</evidence>
<organism>
    <name type="scientific">Prochlorococcus marinus (strain MIT 9303)</name>
    <dbReference type="NCBI Taxonomy" id="59922"/>
    <lineage>
        <taxon>Bacteria</taxon>
        <taxon>Bacillati</taxon>
        <taxon>Cyanobacteriota</taxon>
        <taxon>Cyanophyceae</taxon>
        <taxon>Synechococcales</taxon>
        <taxon>Prochlorococcaceae</taxon>
        <taxon>Prochlorococcus</taxon>
    </lineage>
</organism>
<gene>
    <name evidence="1" type="primary">proA</name>
    <name type="ordered locus">P9303_18451</name>
</gene>
<name>PROA_PROM3</name>
<sequence>MTTSPGVPEPSAQLLRLAAEVRQAAMALGQSDDNQRRKALIAMANALLSSSEQIVRANRLDLEKARTEGLAAALMARLKLDESKLNSAIEGLRQLAQLSDPLGLRQLHRELDQDLVLERITVPLGVLGVIFEARPDAVIQIASLAIRSGNGALLKGGSEASHTNQAIIEALKNGLAETEIDPEAIALLTTRQESLALLRLDGLVDLIIPRGSNELVRFIQDNTRIPVLGHADGICHLYLDAAADLKQALQIAIDSKTQYPAACNAIETLLIHQSIAPSFLELAIPAFRQARVRLLGDSASRALGVEESASEEDWATEYLDLILSVKVVPDLEGALDHIRRYSSRHTEAIVSNDQETAERFLQVVDSAGVFHNCSTRFADGFRYGFGAEVGISTQTLPPRGPVGLEGLVTYRYRLRGQGQIVADYANGECMFTHRDLPL</sequence>